<sequence>MSPTKDSHPSPHFPRDSGIHAPTPPDSGALTLSPPVSQGPGVGPRTGRGNRLCRPPGRSAARSFCLLPGPPLGTGALGSPRAAQGLGFRGSGQRARHNSFTSPSPPGAHHPLGTHTRALPPPLARCPCAALLAGRECHGGPSPAAPRPLPGTSLTWPSRAPLPRPPPRERQGPGDRSPSPSAPSCPGVGASSPRRRKPREAAGLTPDG</sequence>
<reference key="1">
    <citation type="journal article" date="2004" name="Nat. Genet.">
        <title>Complete sequencing and characterization of 21,243 full-length human cDNAs.</title>
        <authorList>
            <person name="Ota T."/>
            <person name="Suzuki Y."/>
            <person name="Nishikawa T."/>
            <person name="Otsuki T."/>
            <person name="Sugiyama T."/>
            <person name="Irie R."/>
            <person name="Wakamatsu A."/>
            <person name="Hayashi K."/>
            <person name="Sato H."/>
            <person name="Nagai K."/>
            <person name="Kimura K."/>
            <person name="Makita H."/>
            <person name="Sekine M."/>
            <person name="Obayashi M."/>
            <person name="Nishi T."/>
            <person name="Shibahara T."/>
            <person name="Tanaka T."/>
            <person name="Ishii S."/>
            <person name="Yamamoto J."/>
            <person name="Saito K."/>
            <person name="Kawai Y."/>
            <person name="Isono Y."/>
            <person name="Nakamura Y."/>
            <person name="Nagahari K."/>
            <person name="Murakami K."/>
            <person name="Yasuda T."/>
            <person name="Iwayanagi T."/>
            <person name="Wagatsuma M."/>
            <person name="Shiratori A."/>
            <person name="Sudo H."/>
            <person name="Hosoiri T."/>
            <person name="Kaku Y."/>
            <person name="Kodaira H."/>
            <person name="Kondo H."/>
            <person name="Sugawara M."/>
            <person name="Takahashi M."/>
            <person name="Kanda K."/>
            <person name="Yokoi T."/>
            <person name="Furuya T."/>
            <person name="Kikkawa E."/>
            <person name="Omura Y."/>
            <person name="Abe K."/>
            <person name="Kamihara K."/>
            <person name="Katsuta N."/>
            <person name="Sato K."/>
            <person name="Tanikawa M."/>
            <person name="Yamazaki M."/>
            <person name="Ninomiya K."/>
            <person name="Ishibashi T."/>
            <person name="Yamashita H."/>
            <person name="Murakawa K."/>
            <person name="Fujimori K."/>
            <person name="Tanai H."/>
            <person name="Kimata M."/>
            <person name="Watanabe M."/>
            <person name="Hiraoka S."/>
            <person name="Chiba Y."/>
            <person name="Ishida S."/>
            <person name="Ono Y."/>
            <person name="Takiguchi S."/>
            <person name="Watanabe S."/>
            <person name="Yosida M."/>
            <person name="Hotuta T."/>
            <person name="Kusano J."/>
            <person name="Kanehori K."/>
            <person name="Takahashi-Fujii A."/>
            <person name="Hara H."/>
            <person name="Tanase T.-O."/>
            <person name="Nomura Y."/>
            <person name="Togiya S."/>
            <person name="Komai F."/>
            <person name="Hara R."/>
            <person name="Takeuchi K."/>
            <person name="Arita M."/>
            <person name="Imose N."/>
            <person name="Musashino K."/>
            <person name="Yuuki H."/>
            <person name="Oshima A."/>
            <person name="Sasaki N."/>
            <person name="Aotsuka S."/>
            <person name="Yoshikawa Y."/>
            <person name="Matsunawa H."/>
            <person name="Ichihara T."/>
            <person name="Shiohata N."/>
            <person name="Sano S."/>
            <person name="Moriya S."/>
            <person name="Momiyama H."/>
            <person name="Satoh N."/>
            <person name="Takami S."/>
            <person name="Terashima Y."/>
            <person name="Suzuki O."/>
            <person name="Nakagawa S."/>
            <person name="Senoh A."/>
            <person name="Mizoguchi H."/>
            <person name="Goto Y."/>
            <person name="Shimizu F."/>
            <person name="Wakebe H."/>
            <person name="Hishigaki H."/>
            <person name="Watanabe T."/>
            <person name="Sugiyama A."/>
            <person name="Takemoto M."/>
            <person name="Kawakami B."/>
            <person name="Yamazaki M."/>
            <person name="Watanabe K."/>
            <person name="Kumagai A."/>
            <person name="Itakura S."/>
            <person name="Fukuzumi Y."/>
            <person name="Fujimori Y."/>
            <person name="Komiyama M."/>
            <person name="Tashiro H."/>
            <person name="Tanigami A."/>
            <person name="Fujiwara T."/>
            <person name="Ono T."/>
            <person name="Yamada K."/>
            <person name="Fujii Y."/>
            <person name="Ozaki K."/>
            <person name="Hirao M."/>
            <person name="Ohmori Y."/>
            <person name="Kawabata A."/>
            <person name="Hikiji T."/>
            <person name="Kobatake N."/>
            <person name="Inagaki H."/>
            <person name="Ikema Y."/>
            <person name="Okamoto S."/>
            <person name="Okitani R."/>
            <person name="Kawakami T."/>
            <person name="Noguchi S."/>
            <person name="Itoh T."/>
            <person name="Shigeta K."/>
            <person name="Senba T."/>
            <person name="Matsumura K."/>
            <person name="Nakajima Y."/>
            <person name="Mizuno T."/>
            <person name="Morinaga M."/>
            <person name="Sasaki M."/>
            <person name="Togashi T."/>
            <person name="Oyama M."/>
            <person name="Hata H."/>
            <person name="Watanabe M."/>
            <person name="Komatsu T."/>
            <person name="Mizushima-Sugano J."/>
            <person name="Satoh T."/>
            <person name="Shirai Y."/>
            <person name="Takahashi Y."/>
            <person name="Nakagawa K."/>
            <person name="Okumura K."/>
            <person name="Nagase T."/>
            <person name="Nomura N."/>
            <person name="Kikuchi H."/>
            <person name="Masuho Y."/>
            <person name="Yamashita R."/>
            <person name="Nakai K."/>
            <person name="Yada T."/>
            <person name="Nakamura Y."/>
            <person name="Ohara O."/>
            <person name="Isogai T."/>
            <person name="Sugano S."/>
        </authorList>
    </citation>
    <scope>NUCLEOTIDE SEQUENCE [LARGE SCALE MRNA]</scope>
    <source>
        <tissue>Testis</tissue>
    </source>
</reference>
<protein>
    <recommendedName>
        <fullName>Putative uncharacterized protein FLJ46214</fullName>
    </recommendedName>
</protein>
<dbReference type="EMBL" id="AK128093">
    <property type="protein sequence ID" value="BAC87272.1"/>
    <property type="molecule type" value="mRNA"/>
</dbReference>
<dbReference type="BioMuta" id="-"/>
<dbReference type="DMDM" id="74711208"/>
<dbReference type="MassIVE" id="Q6ZRN7"/>
<dbReference type="neXtProt" id="NX_Q6ZRN7"/>
<dbReference type="InParanoid" id="Q6ZRN7"/>
<dbReference type="PAN-GO" id="Q6ZRN7">
    <property type="GO annotations" value="0 GO annotations based on evolutionary models"/>
</dbReference>
<dbReference type="PhylomeDB" id="Q6ZRN7"/>
<dbReference type="Pharos" id="Q6ZRN7">
    <property type="development level" value="Tdark"/>
</dbReference>
<dbReference type="Proteomes" id="UP000005640">
    <property type="component" value="Unplaced"/>
</dbReference>
<dbReference type="RNAct" id="Q6ZRN7">
    <property type="molecule type" value="protein"/>
</dbReference>
<evidence type="ECO:0000256" key="1">
    <source>
        <dbReference type="SAM" id="MobiDB-lite"/>
    </source>
</evidence>
<proteinExistence type="evidence at transcript level"/>
<keyword id="KW-1185">Reference proteome</keyword>
<feature type="chain" id="PRO_0000334682" description="Putative uncharacterized protein FLJ46214">
    <location>
        <begin position="1"/>
        <end position="208"/>
    </location>
</feature>
<feature type="region of interest" description="Disordered" evidence="1">
    <location>
        <begin position="1"/>
        <end position="122"/>
    </location>
</feature>
<feature type="region of interest" description="Disordered" evidence="1">
    <location>
        <begin position="135"/>
        <end position="208"/>
    </location>
</feature>
<feature type="compositionally biased region" description="Basic and acidic residues" evidence="1">
    <location>
        <begin position="1"/>
        <end position="18"/>
    </location>
</feature>
<feature type="sequence variant" id="VAR_043457" description="In dbSNP:rs7206805.">
    <original>A</original>
    <variation>G</variation>
    <location>
        <position position="108"/>
    </location>
</feature>
<organism>
    <name type="scientific">Homo sapiens</name>
    <name type="common">Human</name>
    <dbReference type="NCBI Taxonomy" id="9606"/>
    <lineage>
        <taxon>Eukaryota</taxon>
        <taxon>Metazoa</taxon>
        <taxon>Chordata</taxon>
        <taxon>Craniata</taxon>
        <taxon>Vertebrata</taxon>
        <taxon>Euteleostomi</taxon>
        <taxon>Mammalia</taxon>
        <taxon>Eutheria</taxon>
        <taxon>Euarchontoglires</taxon>
        <taxon>Primates</taxon>
        <taxon>Haplorrhini</taxon>
        <taxon>Catarrhini</taxon>
        <taxon>Hominidae</taxon>
        <taxon>Homo</taxon>
    </lineage>
</organism>
<name>YP029_HUMAN</name>
<accession>Q6ZRN7</accession>